<protein>
    <recommendedName>
        <fullName evidence="1">ATP synthase subunit alpha</fullName>
        <ecNumber evidence="1">7.1.2.2</ecNumber>
    </recommendedName>
    <alternativeName>
        <fullName evidence="1">ATP synthase F1 sector subunit alpha</fullName>
    </alternativeName>
    <alternativeName>
        <fullName evidence="1">F-ATPase subunit alpha</fullName>
    </alternativeName>
</protein>
<evidence type="ECO:0000255" key="1">
    <source>
        <dbReference type="HAMAP-Rule" id="MF_01346"/>
    </source>
</evidence>
<comment type="function">
    <text evidence="1">Produces ATP from ADP in the presence of a proton gradient across the membrane. The alpha chain is a regulatory subunit.</text>
</comment>
<comment type="catalytic activity">
    <reaction evidence="1">
        <text>ATP + H2O + 4 H(+)(in) = ADP + phosphate + 5 H(+)(out)</text>
        <dbReference type="Rhea" id="RHEA:57720"/>
        <dbReference type="ChEBI" id="CHEBI:15377"/>
        <dbReference type="ChEBI" id="CHEBI:15378"/>
        <dbReference type="ChEBI" id="CHEBI:30616"/>
        <dbReference type="ChEBI" id="CHEBI:43474"/>
        <dbReference type="ChEBI" id="CHEBI:456216"/>
        <dbReference type="EC" id="7.1.2.2"/>
    </reaction>
</comment>
<comment type="subunit">
    <text evidence="1">F-type ATPases have 2 components, CF(1) - the catalytic core - and CF(0) - the membrane proton channel. CF(1) has five subunits: alpha(3), beta(3), gamma(1), delta(1), epsilon(1). CF(0) has three main subunits: a(1), b(2) and c(9-12). The alpha and beta chains form an alternating ring which encloses part of the gamma chain. CF(1) is attached to CF(0) by a central stalk formed by the gamma and epsilon chains, while a peripheral stalk is formed by the delta and b chains.</text>
</comment>
<comment type="subcellular location">
    <subcellularLocation>
        <location evidence="1">Cell membrane</location>
        <topology evidence="1">Peripheral membrane protein</topology>
    </subcellularLocation>
</comment>
<comment type="similarity">
    <text evidence="1">Belongs to the ATPase alpha/beta chains family.</text>
</comment>
<accession>B8FZ36</accession>
<gene>
    <name evidence="1" type="primary">atpA</name>
    <name type="ordered locus">Dhaf_4793</name>
</gene>
<sequence length="502" mass="54867">MNLRPEEISSIIKQQIERYDSAVEVVDVGTVIQVGDGIARVHGLEKAMSGELLEFPGGIYGMAMNLEEDNIGCIILGKFTEIREGDQVKRTGRIVEVPVGEAMIGRVVNALGQPIDGKGEIKTDKFRPIENIAPGVVYRKSVHEPLQTGLKSIDAIVPIGRGQRELIIGDRQTGKTAVAVDTIINQKGKDVICIYVAVGQKASTVAGVVKTLADHGAMDYSIVVSATASEPAPMLYIAPYSGCAMGEEFMYNGKHVLIIYDDLTKQAAAYRELSLLLKRPPGREAYPGDVFYLHSRLLERAAKLSPDLGSGSMTALPIIETQAGDVSAYIPTNVISITDGQIFLETDLFNAGFRPAINVGISVSRVGGSAQIKAMKQVAGQLRLDLAQYRELAAFAQFGSDLDKITQMRLTRGERMMEILKQKQYEPMVVEEQVVVLYAAVKGFLDDIPVDKIKSFEEEYLRTMRTTKADLLAKIRTEKALNDELNAEIEKAITEVKEGFLG</sequence>
<reference key="1">
    <citation type="journal article" date="2012" name="BMC Microbiol.">
        <title>Genome sequence of Desulfitobacterium hafniense DCB-2, a Gram-positive anaerobe capable of dehalogenation and metal reduction.</title>
        <authorList>
            <person name="Kim S.H."/>
            <person name="Harzman C."/>
            <person name="Davis J.K."/>
            <person name="Hutcheson R."/>
            <person name="Broderick J.B."/>
            <person name="Marsh T.L."/>
            <person name="Tiedje J.M."/>
        </authorList>
    </citation>
    <scope>NUCLEOTIDE SEQUENCE [LARGE SCALE GENOMIC DNA]</scope>
    <source>
        <strain>DSM 10664 / DCB-2</strain>
    </source>
</reference>
<feature type="chain" id="PRO_1000166535" description="ATP synthase subunit alpha">
    <location>
        <begin position="1"/>
        <end position="502"/>
    </location>
</feature>
<feature type="binding site" evidence="1">
    <location>
        <begin position="169"/>
        <end position="176"/>
    </location>
    <ligand>
        <name>ATP</name>
        <dbReference type="ChEBI" id="CHEBI:30616"/>
    </ligand>
</feature>
<feature type="site" description="Required for activity" evidence="1">
    <location>
        <position position="362"/>
    </location>
</feature>
<keyword id="KW-0066">ATP synthesis</keyword>
<keyword id="KW-0067">ATP-binding</keyword>
<keyword id="KW-1003">Cell membrane</keyword>
<keyword id="KW-0139">CF(1)</keyword>
<keyword id="KW-0375">Hydrogen ion transport</keyword>
<keyword id="KW-0406">Ion transport</keyword>
<keyword id="KW-0472">Membrane</keyword>
<keyword id="KW-0547">Nucleotide-binding</keyword>
<keyword id="KW-1278">Translocase</keyword>
<keyword id="KW-0813">Transport</keyword>
<proteinExistence type="inferred from homology"/>
<dbReference type="EC" id="7.1.2.2" evidence="1"/>
<dbReference type="EMBL" id="CP001336">
    <property type="protein sequence ID" value="ACL22788.1"/>
    <property type="molecule type" value="Genomic_DNA"/>
</dbReference>
<dbReference type="RefSeq" id="WP_015945469.1">
    <property type="nucleotide sequence ID" value="NC_011830.1"/>
</dbReference>
<dbReference type="SMR" id="B8FZ36"/>
<dbReference type="KEGG" id="dhd:Dhaf_4793"/>
<dbReference type="HOGENOM" id="CLU_010091_2_1_9"/>
<dbReference type="Proteomes" id="UP000007726">
    <property type="component" value="Chromosome"/>
</dbReference>
<dbReference type="GO" id="GO:0005886">
    <property type="term" value="C:plasma membrane"/>
    <property type="evidence" value="ECO:0007669"/>
    <property type="project" value="UniProtKB-SubCell"/>
</dbReference>
<dbReference type="GO" id="GO:0045259">
    <property type="term" value="C:proton-transporting ATP synthase complex"/>
    <property type="evidence" value="ECO:0007669"/>
    <property type="project" value="UniProtKB-KW"/>
</dbReference>
<dbReference type="GO" id="GO:0043531">
    <property type="term" value="F:ADP binding"/>
    <property type="evidence" value="ECO:0007669"/>
    <property type="project" value="TreeGrafter"/>
</dbReference>
<dbReference type="GO" id="GO:0005524">
    <property type="term" value="F:ATP binding"/>
    <property type="evidence" value="ECO:0007669"/>
    <property type="project" value="UniProtKB-UniRule"/>
</dbReference>
<dbReference type="GO" id="GO:0046933">
    <property type="term" value="F:proton-transporting ATP synthase activity, rotational mechanism"/>
    <property type="evidence" value="ECO:0007669"/>
    <property type="project" value="UniProtKB-UniRule"/>
</dbReference>
<dbReference type="CDD" id="cd18113">
    <property type="entry name" value="ATP-synt_F1_alpha_C"/>
    <property type="match status" value="1"/>
</dbReference>
<dbReference type="CDD" id="cd18116">
    <property type="entry name" value="ATP-synt_F1_alpha_N"/>
    <property type="match status" value="1"/>
</dbReference>
<dbReference type="CDD" id="cd01132">
    <property type="entry name" value="F1-ATPase_alpha_CD"/>
    <property type="match status" value="1"/>
</dbReference>
<dbReference type="FunFam" id="1.20.150.20:FF:000001">
    <property type="entry name" value="ATP synthase subunit alpha"/>
    <property type="match status" value="1"/>
</dbReference>
<dbReference type="FunFam" id="2.40.30.20:FF:000001">
    <property type="entry name" value="ATP synthase subunit alpha"/>
    <property type="match status" value="1"/>
</dbReference>
<dbReference type="FunFam" id="3.40.50.300:FF:000002">
    <property type="entry name" value="ATP synthase subunit alpha"/>
    <property type="match status" value="1"/>
</dbReference>
<dbReference type="Gene3D" id="2.40.30.20">
    <property type="match status" value="1"/>
</dbReference>
<dbReference type="Gene3D" id="1.20.150.20">
    <property type="entry name" value="ATP synthase alpha/beta chain, C-terminal domain"/>
    <property type="match status" value="1"/>
</dbReference>
<dbReference type="Gene3D" id="3.40.50.300">
    <property type="entry name" value="P-loop containing nucleotide triphosphate hydrolases"/>
    <property type="match status" value="1"/>
</dbReference>
<dbReference type="HAMAP" id="MF_01346">
    <property type="entry name" value="ATP_synth_alpha_bact"/>
    <property type="match status" value="1"/>
</dbReference>
<dbReference type="InterPro" id="IPR023366">
    <property type="entry name" value="ATP_synth_asu-like_sf"/>
</dbReference>
<dbReference type="InterPro" id="IPR000793">
    <property type="entry name" value="ATP_synth_asu_C"/>
</dbReference>
<dbReference type="InterPro" id="IPR038376">
    <property type="entry name" value="ATP_synth_asu_C_sf"/>
</dbReference>
<dbReference type="InterPro" id="IPR033732">
    <property type="entry name" value="ATP_synth_F1_a_nt-bd_dom"/>
</dbReference>
<dbReference type="InterPro" id="IPR005294">
    <property type="entry name" value="ATP_synth_F1_asu"/>
</dbReference>
<dbReference type="InterPro" id="IPR020003">
    <property type="entry name" value="ATPase_a/bsu_AS"/>
</dbReference>
<dbReference type="InterPro" id="IPR004100">
    <property type="entry name" value="ATPase_F1/V1/A1_a/bsu_N"/>
</dbReference>
<dbReference type="InterPro" id="IPR036121">
    <property type="entry name" value="ATPase_F1/V1/A1_a/bsu_N_sf"/>
</dbReference>
<dbReference type="InterPro" id="IPR000194">
    <property type="entry name" value="ATPase_F1/V1/A1_a/bsu_nucl-bd"/>
</dbReference>
<dbReference type="InterPro" id="IPR027417">
    <property type="entry name" value="P-loop_NTPase"/>
</dbReference>
<dbReference type="NCBIfam" id="TIGR00962">
    <property type="entry name" value="atpA"/>
    <property type="match status" value="1"/>
</dbReference>
<dbReference type="NCBIfam" id="NF009884">
    <property type="entry name" value="PRK13343.1"/>
    <property type="match status" value="1"/>
</dbReference>
<dbReference type="PANTHER" id="PTHR48082">
    <property type="entry name" value="ATP SYNTHASE SUBUNIT ALPHA, MITOCHONDRIAL"/>
    <property type="match status" value="1"/>
</dbReference>
<dbReference type="PANTHER" id="PTHR48082:SF2">
    <property type="entry name" value="ATP SYNTHASE SUBUNIT ALPHA, MITOCHONDRIAL"/>
    <property type="match status" value="1"/>
</dbReference>
<dbReference type="Pfam" id="PF00006">
    <property type="entry name" value="ATP-synt_ab"/>
    <property type="match status" value="1"/>
</dbReference>
<dbReference type="Pfam" id="PF00306">
    <property type="entry name" value="ATP-synt_ab_C"/>
    <property type="match status" value="1"/>
</dbReference>
<dbReference type="Pfam" id="PF02874">
    <property type="entry name" value="ATP-synt_ab_N"/>
    <property type="match status" value="1"/>
</dbReference>
<dbReference type="PIRSF" id="PIRSF039088">
    <property type="entry name" value="F_ATPase_subunit_alpha"/>
    <property type="match status" value="1"/>
</dbReference>
<dbReference type="SUPFAM" id="SSF47917">
    <property type="entry name" value="C-terminal domain of alpha and beta subunits of F1 ATP synthase"/>
    <property type="match status" value="1"/>
</dbReference>
<dbReference type="SUPFAM" id="SSF50615">
    <property type="entry name" value="N-terminal domain of alpha and beta subunits of F1 ATP synthase"/>
    <property type="match status" value="1"/>
</dbReference>
<dbReference type="SUPFAM" id="SSF52540">
    <property type="entry name" value="P-loop containing nucleoside triphosphate hydrolases"/>
    <property type="match status" value="1"/>
</dbReference>
<dbReference type="PROSITE" id="PS00152">
    <property type="entry name" value="ATPASE_ALPHA_BETA"/>
    <property type="match status" value="1"/>
</dbReference>
<organism>
    <name type="scientific">Desulfitobacterium hafniense (strain DSM 10664 / DCB-2)</name>
    <dbReference type="NCBI Taxonomy" id="272564"/>
    <lineage>
        <taxon>Bacteria</taxon>
        <taxon>Bacillati</taxon>
        <taxon>Bacillota</taxon>
        <taxon>Clostridia</taxon>
        <taxon>Eubacteriales</taxon>
        <taxon>Desulfitobacteriaceae</taxon>
        <taxon>Desulfitobacterium</taxon>
    </lineage>
</organism>
<name>ATPA_DESHD</name>